<comment type="function">
    <text evidence="1">Involved in peptide bond synthesis. Stimulates efficient translation and peptide-bond synthesis on native or reconstituted 70S ribosomes in vitro. Probably functions indirectly by altering the affinity of the ribosome for aminoacyl-tRNA, thus increasing their reactivity as acceptors for peptidyl transferase.</text>
</comment>
<comment type="pathway">
    <text evidence="1">Protein biosynthesis; polypeptide chain elongation.</text>
</comment>
<comment type="subcellular location">
    <subcellularLocation>
        <location evidence="1">Cytoplasm</location>
    </subcellularLocation>
</comment>
<comment type="similarity">
    <text evidence="1">Belongs to the elongation factor P family.</text>
</comment>
<gene>
    <name evidence="1" type="primary">efp</name>
    <name type="ordered locus">SMU_1847</name>
</gene>
<name>EFP_STRMU</name>
<organism>
    <name type="scientific">Streptococcus mutans serotype c (strain ATCC 700610 / UA159)</name>
    <dbReference type="NCBI Taxonomy" id="210007"/>
    <lineage>
        <taxon>Bacteria</taxon>
        <taxon>Bacillati</taxon>
        <taxon>Bacillota</taxon>
        <taxon>Bacilli</taxon>
        <taxon>Lactobacillales</taxon>
        <taxon>Streptococcaceae</taxon>
        <taxon>Streptococcus</taxon>
    </lineage>
</organism>
<accession>Q8DSE7</accession>
<feature type="chain" id="PRO_0000094340" description="Elongation factor P">
    <location>
        <begin position="1"/>
        <end position="186"/>
    </location>
</feature>
<protein>
    <recommendedName>
        <fullName evidence="1">Elongation factor P</fullName>
        <shortName evidence="1">EF-P</shortName>
    </recommendedName>
</protein>
<keyword id="KW-0963">Cytoplasm</keyword>
<keyword id="KW-0251">Elongation factor</keyword>
<keyword id="KW-0648">Protein biosynthesis</keyword>
<keyword id="KW-1185">Reference proteome</keyword>
<proteinExistence type="inferred from homology"/>
<evidence type="ECO:0000255" key="1">
    <source>
        <dbReference type="HAMAP-Rule" id="MF_00141"/>
    </source>
</evidence>
<sequence length="186" mass="20781">MIEASKLKAGMTFETTDGKLIRVLEASHHKPGKGNTVMRMKLRDVRTGSTFDTTYRPEEKFEQAIIETRPAQYLYQMDDTAYFMDTENYEQYEIPIVNIENELKFILENSEVKIQFYGSEVIGVTIPTTVELVVTDTQPSIKGATVTGSGKPATLETGLVVNVPDFIEVGQKLVINTAEGTYVSRA</sequence>
<reference key="1">
    <citation type="journal article" date="2002" name="Proc. Natl. Acad. Sci. U.S.A.">
        <title>Genome sequence of Streptococcus mutans UA159, a cariogenic dental pathogen.</title>
        <authorList>
            <person name="Ajdic D.J."/>
            <person name="McShan W.M."/>
            <person name="McLaughlin R.E."/>
            <person name="Savic G."/>
            <person name="Chang J."/>
            <person name="Carson M.B."/>
            <person name="Primeaux C."/>
            <person name="Tian R."/>
            <person name="Kenton S."/>
            <person name="Jia H.G."/>
            <person name="Lin S.P."/>
            <person name="Qian Y."/>
            <person name="Li S."/>
            <person name="Zhu H."/>
            <person name="Najar F.Z."/>
            <person name="Lai H."/>
            <person name="White J."/>
            <person name="Roe B.A."/>
            <person name="Ferretti J.J."/>
        </authorList>
    </citation>
    <scope>NUCLEOTIDE SEQUENCE [LARGE SCALE GENOMIC DNA]</scope>
    <source>
        <strain>ATCC 700610 / UA159</strain>
    </source>
</reference>
<dbReference type="EMBL" id="AE014133">
    <property type="protein sequence ID" value="AAN59469.1"/>
    <property type="molecule type" value="Genomic_DNA"/>
</dbReference>
<dbReference type="RefSeq" id="NP_722163.1">
    <property type="nucleotide sequence ID" value="NC_004350.2"/>
</dbReference>
<dbReference type="RefSeq" id="WP_002262662.1">
    <property type="nucleotide sequence ID" value="NC_004350.2"/>
</dbReference>
<dbReference type="SMR" id="Q8DSE7"/>
<dbReference type="STRING" id="210007.SMU_1847"/>
<dbReference type="GeneID" id="93858738"/>
<dbReference type="KEGG" id="smu:SMU_1847"/>
<dbReference type="PATRIC" id="fig|210007.7.peg.1649"/>
<dbReference type="eggNOG" id="COG0231">
    <property type="taxonomic scope" value="Bacteria"/>
</dbReference>
<dbReference type="HOGENOM" id="CLU_074944_3_0_9"/>
<dbReference type="OrthoDB" id="9801844at2"/>
<dbReference type="PhylomeDB" id="Q8DSE7"/>
<dbReference type="UniPathway" id="UPA00345"/>
<dbReference type="Proteomes" id="UP000002512">
    <property type="component" value="Chromosome"/>
</dbReference>
<dbReference type="GO" id="GO:0005737">
    <property type="term" value="C:cytoplasm"/>
    <property type="evidence" value="ECO:0007669"/>
    <property type="project" value="UniProtKB-SubCell"/>
</dbReference>
<dbReference type="GO" id="GO:0003746">
    <property type="term" value="F:translation elongation factor activity"/>
    <property type="evidence" value="ECO:0007669"/>
    <property type="project" value="UniProtKB-UniRule"/>
</dbReference>
<dbReference type="GO" id="GO:0043043">
    <property type="term" value="P:peptide biosynthetic process"/>
    <property type="evidence" value="ECO:0007669"/>
    <property type="project" value="InterPro"/>
</dbReference>
<dbReference type="CDD" id="cd04470">
    <property type="entry name" value="S1_EF-P_repeat_1"/>
    <property type="match status" value="1"/>
</dbReference>
<dbReference type="CDD" id="cd05794">
    <property type="entry name" value="S1_EF-P_repeat_2"/>
    <property type="match status" value="1"/>
</dbReference>
<dbReference type="FunFam" id="2.30.30.30:FF:000003">
    <property type="entry name" value="Elongation factor P"/>
    <property type="match status" value="1"/>
</dbReference>
<dbReference type="FunFam" id="2.40.50.140:FF:000004">
    <property type="entry name" value="Elongation factor P"/>
    <property type="match status" value="1"/>
</dbReference>
<dbReference type="FunFam" id="2.40.50.140:FF:000009">
    <property type="entry name" value="Elongation factor P"/>
    <property type="match status" value="1"/>
</dbReference>
<dbReference type="Gene3D" id="2.30.30.30">
    <property type="match status" value="1"/>
</dbReference>
<dbReference type="Gene3D" id="2.40.50.140">
    <property type="entry name" value="Nucleic acid-binding proteins"/>
    <property type="match status" value="2"/>
</dbReference>
<dbReference type="HAMAP" id="MF_00141">
    <property type="entry name" value="EF_P"/>
    <property type="match status" value="1"/>
</dbReference>
<dbReference type="InterPro" id="IPR015365">
    <property type="entry name" value="Elong-fact-P_C"/>
</dbReference>
<dbReference type="InterPro" id="IPR012340">
    <property type="entry name" value="NA-bd_OB-fold"/>
</dbReference>
<dbReference type="InterPro" id="IPR014722">
    <property type="entry name" value="Rib_uL2_dom2"/>
</dbReference>
<dbReference type="InterPro" id="IPR020599">
    <property type="entry name" value="Transl_elong_fac_P/YeiP"/>
</dbReference>
<dbReference type="InterPro" id="IPR013185">
    <property type="entry name" value="Transl_elong_KOW-like"/>
</dbReference>
<dbReference type="InterPro" id="IPR001059">
    <property type="entry name" value="Transl_elong_P/YeiP_cen"/>
</dbReference>
<dbReference type="InterPro" id="IPR013852">
    <property type="entry name" value="Transl_elong_P/YeiP_CS"/>
</dbReference>
<dbReference type="InterPro" id="IPR011768">
    <property type="entry name" value="Transl_elongation_fac_P"/>
</dbReference>
<dbReference type="InterPro" id="IPR008991">
    <property type="entry name" value="Translation_prot_SH3-like_sf"/>
</dbReference>
<dbReference type="NCBIfam" id="TIGR00038">
    <property type="entry name" value="efp"/>
    <property type="match status" value="1"/>
</dbReference>
<dbReference type="NCBIfam" id="NF001810">
    <property type="entry name" value="PRK00529.1"/>
    <property type="match status" value="1"/>
</dbReference>
<dbReference type="PANTHER" id="PTHR30053">
    <property type="entry name" value="ELONGATION FACTOR P"/>
    <property type="match status" value="1"/>
</dbReference>
<dbReference type="PANTHER" id="PTHR30053:SF12">
    <property type="entry name" value="ELONGATION FACTOR P (EF-P) FAMILY PROTEIN"/>
    <property type="match status" value="1"/>
</dbReference>
<dbReference type="Pfam" id="PF01132">
    <property type="entry name" value="EFP"/>
    <property type="match status" value="1"/>
</dbReference>
<dbReference type="Pfam" id="PF08207">
    <property type="entry name" value="EFP_N"/>
    <property type="match status" value="1"/>
</dbReference>
<dbReference type="Pfam" id="PF09285">
    <property type="entry name" value="Elong-fact-P_C"/>
    <property type="match status" value="1"/>
</dbReference>
<dbReference type="PIRSF" id="PIRSF005901">
    <property type="entry name" value="EF-P"/>
    <property type="match status" value="1"/>
</dbReference>
<dbReference type="SMART" id="SM01185">
    <property type="entry name" value="EFP"/>
    <property type="match status" value="1"/>
</dbReference>
<dbReference type="SMART" id="SM00841">
    <property type="entry name" value="Elong-fact-P_C"/>
    <property type="match status" value="1"/>
</dbReference>
<dbReference type="SUPFAM" id="SSF50249">
    <property type="entry name" value="Nucleic acid-binding proteins"/>
    <property type="match status" value="2"/>
</dbReference>
<dbReference type="SUPFAM" id="SSF50104">
    <property type="entry name" value="Translation proteins SH3-like domain"/>
    <property type="match status" value="1"/>
</dbReference>
<dbReference type="PROSITE" id="PS01275">
    <property type="entry name" value="EFP"/>
    <property type="match status" value="1"/>
</dbReference>